<dbReference type="EC" id="2.7.1.25" evidence="1"/>
<dbReference type="EMBL" id="AE001437">
    <property type="protein sequence ID" value="AAK78088.1"/>
    <property type="molecule type" value="Genomic_DNA"/>
</dbReference>
<dbReference type="PIR" id="E96912">
    <property type="entry name" value="E96912"/>
</dbReference>
<dbReference type="RefSeq" id="NP_346748.1">
    <property type="nucleotide sequence ID" value="NC_003030.1"/>
</dbReference>
<dbReference type="RefSeq" id="WP_010963430.1">
    <property type="nucleotide sequence ID" value="NC_003030.1"/>
</dbReference>
<dbReference type="SMR" id="Q97MT8"/>
<dbReference type="STRING" id="272562.CA_C0103"/>
<dbReference type="GeneID" id="44996585"/>
<dbReference type="KEGG" id="cac:CA_C0103"/>
<dbReference type="PATRIC" id="fig|272562.8.peg.287"/>
<dbReference type="eggNOG" id="COG0529">
    <property type="taxonomic scope" value="Bacteria"/>
</dbReference>
<dbReference type="HOGENOM" id="CLU_046932_1_0_9"/>
<dbReference type="OrthoDB" id="9804504at2"/>
<dbReference type="UniPathway" id="UPA00140">
    <property type="reaction ID" value="UER00205"/>
</dbReference>
<dbReference type="Proteomes" id="UP000000814">
    <property type="component" value="Chromosome"/>
</dbReference>
<dbReference type="GO" id="GO:0004020">
    <property type="term" value="F:adenylylsulfate kinase activity"/>
    <property type="evidence" value="ECO:0007669"/>
    <property type="project" value="UniProtKB-UniRule"/>
</dbReference>
<dbReference type="GO" id="GO:0005524">
    <property type="term" value="F:ATP binding"/>
    <property type="evidence" value="ECO:0007669"/>
    <property type="project" value="UniProtKB-UniRule"/>
</dbReference>
<dbReference type="GO" id="GO:0070814">
    <property type="term" value="P:hydrogen sulfide biosynthetic process"/>
    <property type="evidence" value="ECO:0007669"/>
    <property type="project" value="UniProtKB-UniRule"/>
</dbReference>
<dbReference type="GO" id="GO:0000103">
    <property type="term" value="P:sulfate assimilation"/>
    <property type="evidence" value="ECO:0007669"/>
    <property type="project" value="UniProtKB-UniRule"/>
</dbReference>
<dbReference type="CDD" id="cd02027">
    <property type="entry name" value="APSK"/>
    <property type="match status" value="1"/>
</dbReference>
<dbReference type="FunFam" id="3.40.50.300:FF:000212">
    <property type="entry name" value="Adenylyl-sulfate kinase"/>
    <property type="match status" value="1"/>
</dbReference>
<dbReference type="Gene3D" id="3.40.50.300">
    <property type="entry name" value="P-loop containing nucleotide triphosphate hydrolases"/>
    <property type="match status" value="1"/>
</dbReference>
<dbReference type="HAMAP" id="MF_00065">
    <property type="entry name" value="Adenylyl_sulf_kinase"/>
    <property type="match status" value="1"/>
</dbReference>
<dbReference type="InterPro" id="IPR002891">
    <property type="entry name" value="APS_kinase"/>
</dbReference>
<dbReference type="InterPro" id="IPR027417">
    <property type="entry name" value="P-loop_NTPase"/>
</dbReference>
<dbReference type="NCBIfam" id="TIGR00455">
    <property type="entry name" value="apsK"/>
    <property type="match status" value="1"/>
</dbReference>
<dbReference type="NCBIfam" id="NF003013">
    <property type="entry name" value="PRK03846.1"/>
    <property type="match status" value="1"/>
</dbReference>
<dbReference type="NCBIfam" id="NF004041">
    <property type="entry name" value="PRK05541.1"/>
    <property type="match status" value="1"/>
</dbReference>
<dbReference type="PANTHER" id="PTHR11055">
    <property type="entry name" value="BIFUNCTIONAL 3'-PHOSPHOADENOSINE 5'-PHOSPHOSULFATE SYNTHASE"/>
    <property type="match status" value="1"/>
</dbReference>
<dbReference type="PANTHER" id="PTHR11055:SF1">
    <property type="entry name" value="PAPS SYNTHETASE, ISOFORM D"/>
    <property type="match status" value="1"/>
</dbReference>
<dbReference type="Pfam" id="PF01583">
    <property type="entry name" value="APS_kinase"/>
    <property type="match status" value="1"/>
</dbReference>
<dbReference type="SUPFAM" id="SSF52540">
    <property type="entry name" value="P-loop containing nucleoside triphosphate hydrolases"/>
    <property type="match status" value="1"/>
</dbReference>
<name>CYSC_CLOAB</name>
<reference key="1">
    <citation type="journal article" date="2001" name="J. Bacteriol.">
        <title>Genome sequence and comparative analysis of the solvent-producing bacterium Clostridium acetobutylicum.</title>
        <authorList>
            <person name="Noelling J."/>
            <person name="Breton G."/>
            <person name="Omelchenko M.V."/>
            <person name="Makarova K.S."/>
            <person name="Zeng Q."/>
            <person name="Gibson R."/>
            <person name="Lee H.M."/>
            <person name="Dubois J."/>
            <person name="Qiu D."/>
            <person name="Hitti J."/>
            <person name="Wolf Y.I."/>
            <person name="Tatusov R.L."/>
            <person name="Sabathe F."/>
            <person name="Doucette-Stamm L.A."/>
            <person name="Soucaille P."/>
            <person name="Daly M.J."/>
            <person name="Bennett G.N."/>
            <person name="Koonin E.V."/>
            <person name="Smith D.R."/>
        </authorList>
    </citation>
    <scope>NUCLEOTIDE SEQUENCE [LARGE SCALE GENOMIC DNA]</scope>
    <source>
        <strain>ATCC 824 / DSM 792 / JCM 1419 / IAM 19013 / LMG 5710 / NBRC 13948 / NRRL B-527 / VKM B-1787 / 2291 / W</strain>
    </source>
</reference>
<sequence length="200" mass="23001">MNNKKSTNVVWQETKIKRQNREKMLKQKGAVLWFTGLSGSGKSTVASALEKKLYEMGYLTYLLDGDNLRYGLNSDLGFKSEDRTENIRRVSEVAKLFADAGIITITTFISPFIEDRNNARKLLGKDFVEVYIDCPIEVCEKRDPKGIYKKARNGEIKNFTGIDSPYEKPEKPEITVETYKDTEEKCVDNIIEYLKQHKIL</sequence>
<evidence type="ECO:0000255" key="1">
    <source>
        <dbReference type="HAMAP-Rule" id="MF_00065"/>
    </source>
</evidence>
<gene>
    <name evidence="1" type="primary">cysC</name>
    <name type="ordered locus">CA_C0103</name>
</gene>
<organism>
    <name type="scientific">Clostridium acetobutylicum (strain ATCC 824 / DSM 792 / JCM 1419 / IAM 19013 / LMG 5710 / NBRC 13948 / NRRL B-527 / VKM B-1787 / 2291 / W)</name>
    <dbReference type="NCBI Taxonomy" id="272562"/>
    <lineage>
        <taxon>Bacteria</taxon>
        <taxon>Bacillati</taxon>
        <taxon>Bacillota</taxon>
        <taxon>Clostridia</taxon>
        <taxon>Eubacteriales</taxon>
        <taxon>Clostridiaceae</taxon>
        <taxon>Clostridium</taxon>
    </lineage>
</organism>
<comment type="function">
    <text evidence="1">Catalyzes the synthesis of activated sulfate.</text>
</comment>
<comment type="catalytic activity">
    <reaction evidence="1">
        <text>adenosine 5'-phosphosulfate + ATP = 3'-phosphoadenylyl sulfate + ADP + H(+)</text>
        <dbReference type="Rhea" id="RHEA:24152"/>
        <dbReference type="ChEBI" id="CHEBI:15378"/>
        <dbReference type="ChEBI" id="CHEBI:30616"/>
        <dbReference type="ChEBI" id="CHEBI:58243"/>
        <dbReference type="ChEBI" id="CHEBI:58339"/>
        <dbReference type="ChEBI" id="CHEBI:456216"/>
        <dbReference type="EC" id="2.7.1.25"/>
    </reaction>
</comment>
<comment type="pathway">
    <text evidence="1">Sulfur metabolism; hydrogen sulfide biosynthesis; sulfite from sulfate: step 2/3.</text>
</comment>
<comment type="similarity">
    <text evidence="1">Belongs to the APS kinase family.</text>
</comment>
<accession>Q97MT8</accession>
<protein>
    <recommendedName>
        <fullName evidence="1">Adenylyl-sulfate kinase</fullName>
        <ecNumber evidence="1">2.7.1.25</ecNumber>
    </recommendedName>
    <alternativeName>
        <fullName evidence="1">APS kinase</fullName>
    </alternativeName>
    <alternativeName>
        <fullName evidence="1">ATP adenosine-5'-phosphosulfate 3'-phosphotransferase</fullName>
    </alternativeName>
    <alternativeName>
        <fullName evidence="1">Adenosine-5'-phosphosulfate kinase</fullName>
    </alternativeName>
</protein>
<keyword id="KW-0067">ATP-binding</keyword>
<keyword id="KW-0418">Kinase</keyword>
<keyword id="KW-0547">Nucleotide-binding</keyword>
<keyword id="KW-0597">Phosphoprotein</keyword>
<keyword id="KW-1185">Reference proteome</keyword>
<keyword id="KW-0808">Transferase</keyword>
<proteinExistence type="inferred from homology"/>
<feature type="chain" id="PRO_0000105907" description="Adenylyl-sulfate kinase">
    <location>
        <begin position="1"/>
        <end position="200"/>
    </location>
</feature>
<feature type="active site" description="Phosphoserine intermediate" evidence="1">
    <location>
        <position position="110"/>
    </location>
</feature>
<feature type="binding site" evidence="1">
    <location>
        <begin position="36"/>
        <end position="43"/>
    </location>
    <ligand>
        <name>ATP</name>
        <dbReference type="ChEBI" id="CHEBI:30616"/>
    </ligand>
</feature>